<accession>Q8F7A0</accession>
<comment type="function">
    <text evidence="1">Catalyzes the formation of 4-diphosphocytidyl-2-C-methyl-D-erythritol from CTP and 2-C-methyl-D-erythritol 4-phosphate (MEP).</text>
</comment>
<comment type="catalytic activity">
    <reaction evidence="1">
        <text>2-C-methyl-D-erythritol 4-phosphate + CTP + H(+) = 4-CDP-2-C-methyl-D-erythritol + diphosphate</text>
        <dbReference type="Rhea" id="RHEA:13429"/>
        <dbReference type="ChEBI" id="CHEBI:15378"/>
        <dbReference type="ChEBI" id="CHEBI:33019"/>
        <dbReference type="ChEBI" id="CHEBI:37563"/>
        <dbReference type="ChEBI" id="CHEBI:57823"/>
        <dbReference type="ChEBI" id="CHEBI:58262"/>
        <dbReference type="EC" id="2.7.7.60"/>
    </reaction>
</comment>
<comment type="pathway">
    <text evidence="1">Isoprenoid biosynthesis; isopentenyl diphosphate biosynthesis via DXP pathway; isopentenyl diphosphate from 1-deoxy-D-xylulose 5-phosphate: step 2/6.</text>
</comment>
<comment type="similarity">
    <text evidence="1">Belongs to the IspD/TarI cytidylyltransferase family. IspD subfamily.</text>
</comment>
<keyword id="KW-0414">Isoprene biosynthesis</keyword>
<keyword id="KW-0548">Nucleotidyltransferase</keyword>
<keyword id="KW-1185">Reference proteome</keyword>
<keyword id="KW-0808">Transferase</keyword>
<reference key="1">
    <citation type="journal article" date="2003" name="Nature">
        <title>Unique physiological and pathogenic features of Leptospira interrogans revealed by whole-genome sequencing.</title>
        <authorList>
            <person name="Ren S.-X."/>
            <person name="Fu G."/>
            <person name="Jiang X.-G."/>
            <person name="Zeng R."/>
            <person name="Miao Y.-G."/>
            <person name="Xu H."/>
            <person name="Zhang Y.-X."/>
            <person name="Xiong H."/>
            <person name="Lu G."/>
            <person name="Lu L.-F."/>
            <person name="Jiang H.-Q."/>
            <person name="Jia J."/>
            <person name="Tu Y.-F."/>
            <person name="Jiang J.-X."/>
            <person name="Gu W.-Y."/>
            <person name="Zhang Y.-Q."/>
            <person name="Cai Z."/>
            <person name="Sheng H.-H."/>
            <person name="Yin H.-F."/>
            <person name="Zhang Y."/>
            <person name="Zhu G.-F."/>
            <person name="Wan M."/>
            <person name="Huang H.-L."/>
            <person name="Qian Z."/>
            <person name="Wang S.-Y."/>
            <person name="Ma W."/>
            <person name="Yao Z.-J."/>
            <person name="Shen Y."/>
            <person name="Qiang B.-Q."/>
            <person name="Xia Q.-C."/>
            <person name="Guo X.-K."/>
            <person name="Danchin A."/>
            <person name="Saint Girons I."/>
            <person name="Somerville R.L."/>
            <person name="Wen Y.-M."/>
            <person name="Shi M.-H."/>
            <person name="Chen Z."/>
            <person name="Xu J.-G."/>
            <person name="Zhao G.-P."/>
        </authorList>
    </citation>
    <scope>NUCLEOTIDE SEQUENCE [LARGE SCALE GENOMIC DNA]</scope>
    <source>
        <strain>56601</strain>
    </source>
</reference>
<protein>
    <recommendedName>
        <fullName evidence="1">2-C-methyl-D-erythritol 4-phosphate cytidylyltransferase</fullName>
        <ecNumber evidence="1">2.7.7.60</ecNumber>
    </recommendedName>
    <alternativeName>
        <fullName evidence="1">4-diphosphocytidyl-2C-methyl-D-erythritol synthase</fullName>
    </alternativeName>
    <alternativeName>
        <fullName evidence="1">MEP cytidylyltransferase</fullName>
        <shortName evidence="1">MCT</shortName>
    </alternativeName>
</protein>
<evidence type="ECO:0000255" key="1">
    <source>
        <dbReference type="HAMAP-Rule" id="MF_00108"/>
    </source>
</evidence>
<proteinExistence type="inferred from homology"/>
<feature type="chain" id="PRO_0000075582" description="2-C-methyl-D-erythritol 4-phosphate cytidylyltransferase">
    <location>
        <begin position="1"/>
        <end position="238"/>
    </location>
</feature>
<feature type="site" description="Transition state stabilizer" evidence="1">
    <location>
        <position position="22"/>
    </location>
</feature>
<feature type="site" description="Transition state stabilizer" evidence="1">
    <location>
        <position position="29"/>
    </location>
</feature>
<feature type="site" description="Positions MEP for the nucleophilic attack" evidence="1">
    <location>
        <position position="160"/>
    </location>
</feature>
<feature type="site" description="Positions MEP for the nucleophilic attack" evidence="1">
    <location>
        <position position="214"/>
    </location>
</feature>
<dbReference type="EC" id="2.7.7.60" evidence="1"/>
<dbReference type="EMBL" id="AE010300">
    <property type="protein sequence ID" value="AAN48247.1"/>
    <property type="molecule type" value="Genomic_DNA"/>
</dbReference>
<dbReference type="RefSeq" id="NP_711229.1">
    <property type="nucleotide sequence ID" value="NC_004342.2"/>
</dbReference>
<dbReference type="RefSeq" id="WP_000838282.1">
    <property type="nucleotide sequence ID" value="NC_004342.2"/>
</dbReference>
<dbReference type="SMR" id="Q8F7A0"/>
<dbReference type="FunCoup" id="Q8F7A0">
    <property type="interactions" value="434"/>
</dbReference>
<dbReference type="STRING" id="189518.LA_1048"/>
<dbReference type="PaxDb" id="189518-LA_1048"/>
<dbReference type="EnsemblBacteria" id="AAN48247">
    <property type="protein sequence ID" value="AAN48247"/>
    <property type="gene ID" value="LA_1048"/>
</dbReference>
<dbReference type="KEGG" id="lil:LA_1048"/>
<dbReference type="PATRIC" id="fig|189518.3.peg.1044"/>
<dbReference type="HOGENOM" id="CLU_061281_2_2_12"/>
<dbReference type="InParanoid" id="Q8F7A0"/>
<dbReference type="OrthoDB" id="9806837at2"/>
<dbReference type="UniPathway" id="UPA00056">
    <property type="reaction ID" value="UER00093"/>
</dbReference>
<dbReference type="Proteomes" id="UP000001408">
    <property type="component" value="Chromosome I"/>
</dbReference>
<dbReference type="GO" id="GO:0005829">
    <property type="term" value="C:cytosol"/>
    <property type="evidence" value="ECO:0000318"/>
    <property type="project" value="GO_Central"/>
</dbReference>
<dbReference type="GO" id="GO:0050518">
    <property type="term" value="F:2-C-methyl-D-erythritol 4-phosphate cytidylyltransferase activity"/>
    <property type="evidence" value="ECO:0007669"/>
    <property type="project" value="UniProtKB-UniRule"/>
</dbReference>
<dbReference type="GO" id="GO:0070567">
    <property type="term" value="F:cytidylyltransferase activity"/>
    <property type="evidence" value="ECO:0000318"/>
    <property type="project" value="GO_Central"/>
</dbReference>
<dbReference type="GO" id="GO:0019288">
    <property type="term" value="P:isopentenyl diphosphate biosynthetic process, methylerythritol 4-phosphate pathway"/>
    <property type="evidence" value="ECO:0007669"/>
    <property type="project" value="UniProtKB-UniRule"/>
</dbReference>
<dbReference type="CDD" id="cd02516">
    <property type="entry name" value="CDP-ME_synthetase"/>
    <property type="match status" value="1"/>
</dbReference>
<dbReference type="Gene3D" id="3.90.550.10">
    <property type="entry name" value="Spore Coat Polysaccharide Biosynthesis Protein SpsA, Chain A"/>
    <property type="match status" value="1"/>
</dbReference>
<dbReference type="HAMAP" id="MF_00108">
    <property type="entry name" value="IspD"/>
    <property type="match status" value="1"/>
</dbReference>
<dbReference type="InterPro" id="IPR001228">
    <property type="entry name" value="IspD"/>
</dbReference>
<dbReference type="InterPro" id="IPR034683">
    <property type="entry name" value="IspD/TarI"/>
</dbReference>
<dbReference type="InterPro" id="IPR018294">
    <property type="entry name" value="ISPD_synthase_CS"/>
</dbReference>
<dbReference type="InterPro" id="IPR029044">
    <property type="entry name" value="Nucleotide-diphossugar_trans"/>
</dbReference>
<dbReference type="PANTHER" id="PTHR43015">
    <property type="entry name" value="D-RIBITOL-5-PHOSPHATE CYTIDYLYLTRANSFERASE"/>
    <property type="match status" value="1"/>
</dbReference>
<dbReference type="PANTHER" id="PTHR43015:SF1">
    <property type="entry name" value="D-RIBITOL-5-PHOSPHATE CYTIDYLYLTRANSFERASE"/>
    <property type="match status" value="1"/>
</dbReference>
<dbReference type="Pfam" id="PF01128">
    <property type="entry name" value="IspD"/>
    <property type="match status" value="1"/>
</dbReference>
<dbReference type="SUPFAM" id="SSF53448">
    <property type="entry name" value="Nucleotide-diphospho-sugar transferases"/>
    <property type="match status" value="1"/>
</dbReference>
<dbReference type="PROSITE" id="PS01295">
    <property type="entry name" value="ISPD"/>
    <property type="match status" value="1"/>
</dbReference>
<organism>
    <name type="scientific">Leptospira interrogans serogroup Icterohaemorrhagiae serovar Lai (strain 56601)</name>
    <dbReference type="NCBI Taxonomy" id="189518"/>
    <lineage>
        <taxon>Bacteria</taxon>
        <taxon>Pseudomonadati</taxon>
        <taxon>Spirochaetota</taxon>
        <taxon>Spirochaetia</taxon>
        <taxon>Leptospirales</taxon>
        <taxon>Leptospiraceae</taxon>
        <taxon>Leptospira</taxon>
    </lineage>
</organism>
<name>ISPD_LEPIN</name>
<gene>
    <name evidence="1" type="primary">ispD</name>
    <name type="ordered locus">LA_1048</name>
</gene>
<sequence>MKSLFLSEKIYVLILAGGTGSRMGSKIPKQFLELNGEPILIHSLKRFQNWGKQKRIVLVSHFESIPKIESICASYLENEDRIVQGGENRHSSMLCGLSVLDFKDEDIILVHDAARPFVLADELDSLCEKVRSDGIATLASRTSETVLEELNGKTVSFLDREHVWFMKTPQGIRGDVLKELLTFSVDSIPTDLCSWALTFGKTSSIVESNPLNLKITRKEDLDLAEVFSSLFQKISSDI</sequence>